<name>RL32_STAS1</name>
<dbReference type="EMBL" id="AP008934">
    <property type="protein sequence ID" value="BAE18805.1"/>
    <property type="molecule type" value="Genomic_DNA"/>
</dbReference>
<dbReference type="RefSeq" id="WP_011303391.1">
    <property type="nucleotide sequence ID" value="NZ_MTGA01000039.1"/>
</dbReference>
<dbReference type="SMR" id="Q49WQ2"/>
<dbReference type="GeneID" id="66867837"/>
<dbReference type="KEGG" id="ssp:SSP1660"/>
<dbReference type="eggNOG" id="COG0333">
    <property type="taxonomic scope" value="Bacteria"/>
</dbReference>
<dbReference type="HOGENOM" id="CLU_129084_1_3_9"/>
<dbReference type="OrthoDB" id="9812874at2"/>
<dbReference type="Proteomes" id="UP000006371">
    <property type="component" value="Chromosome"/>
</dbReference>
<dbReference type="GO" id="GO:0015934">
    <property type="term" value="C:large ribosomal subunit"/>
    <property type="evidence" value="ECO:0007669"/>
    <property type="project" value="InterPro"/>
</dbReference>
<dbReference type="GO" id="GO:0003735">
    <property type="term" value="F:structural constituent of ribosome"/>
    <property type="evidence" value="ECO:0007669"/>
    <property type="project" value="InterPro"/>
</dbReference>
<dbReference type="GO" id="GO:0006412">
    <property type="term" value="P:translation"/>
    <property type="evidence" value="ECO:0007669"/>
    <property type="project" value="UniProtKB-UniRule"/>
</dbReference>
<dbReference type="Gene3D" id="1.20.5.640">
    <property type="entry name" value="Single helix bin"/>
    <property type="match status" value="1"/>
</dbReference>
<dbReference type="HAMAP" id="MF_00340">
    <property type="entry name" value="Ribosomal_bL32"/>
    <property type="match status" value="1"/>
</dbReference>
<dbReference type="InterPro" id="IPR002677">
    <property type="entry name" value="Ribosomal_bL32"/>
</dbReference>
<dbReference type="InterPro" id="IPR044957">
    <property type="entry name" value="Ribosomal_bL32_bact"/>
</dbReference>
<dbReference type="InterPro" id="IPR011332">
    <property type="entry name" value="Ribosomal_zn-bd"/>
</dbReference>
<dbReference type="NCBIfam" id="TIGR01031">
    <property type="entry name" value="rpmF_bact"/>
    <property type="match status" value="1"/>
</dbReference>
<dbReference type="PANTHER" id="PTHR35534">
    <property type="entry name" value="50S RIBOSOMAL PROTEIN L32"/>
    <property type="match status" value="1"/>
</dbReference>
<dbReference type="PANTHER" id="PTHR35534:SF2">
    <property type="entry name" value="LARGE RIBOSOMAL SUBUNIT PROTEIN BL32"/>
    <property type="match status" value="1"/>
</dbReference>
<dbReference type="Pfam" id="PF01783">
    <property type="entry name" value="Ribosomal_L32p"/>
    <property type="match status" value="1"/>
</dbReference>
<dbReference type="SUPFAM" id="SSF57829">
    <property type="entry name" value="Zn-binding ribosomal proteins"/>
    <property type="match status" value="1"/>
</dbReference>
<evidence type="ECO:0000255" key="1">
    <source>
        <dbReference type="HAMAP-Rule" id="MF_00340"/>
    </source>
</evidence>
<evidence type="ECO:0000305" key="2"/>
<organism>
    <name type="scientific">Staphylococcus saprophyticus subsp. saprophyticus (strain ATCC 15305 / DSM 20229 / NCIMB 8711 / NCTC 7292 / S-41)</name>
    <dbReference type="NCBI Taxonomy" id="342451"/>
    <lineage>
        <taxon>Bacteria</taxon>
        <taxon>Bacillati</taxon>
        <taxon>Bacillota</taxon>
        <taxon>Bacilli</taxon>
        <taxon>Bacillales</taxon>
        <taxon>Staphylococcaceae</taxon>
        <taxon>Staphylococcus</taxon>
    </lineage>
</organism>
<reference key="1">
    <citation type="journal article" date="2005" name="Proc. Natl. Acad. Sci. U.S.A.">
        <title>Whole genome sequence of Staphylococcus saprophyticus reveals the pathogenesis of uncomplicated urinary tract infection.</title>
        <authorList>
            <person name="Kuroda M."/>
            <person name="Yamashita A."/>
            <person name="Hirakawa H."/>
            <person name="Kumano M."/>
            <person name="Morikawa K."/>
            <person name="Higashide M."/>
            <person name="Maruyama A."/>
            <person name="Inose Y."/>
            <person name="Matoba K."/>
            <person name="Toh H."/>
            <person name="Kuhara S."/>
            <person name="Hattori M."/>
            <person name="Ohta T."/>
        </authorList>
    </citation>
    <scope>NUCLEOTIDE SEQUENCE [LARGE SCALE GENOMIC DNA]</scope>
    <source>
        <strain>ATCC 15305 / DSM 20229 / NCIMB 8711 / NCTC 7292 / S-41</strain>
    </source>
</reference>
<proteinExistence type="inferred from homology"/>
<comment type="similarity">
    <text evidence="1">Belongs to the bacterial ribosomal protein bL32 family.</text>
</comment>
<keyword id="KW-1185">Reference proteome</keyword>
<keyword id="KW-0687">Ribonucleoprotein</keyword>
<keyword id="KW-0689">Ribosomal protein</keyword>
<accession>Q49WQ2</accession>
<protein>
    <recommendedName>
        <fullName evidence="1">Large ribosomal subunit protein bL32</fullName>
    </recommendedName>
    <alternativeName>
        <fullName evidence="2">50S ribosomal protein L32</fullName>
    </alternativeName>
</protein>
<gene>
    <name evidence="1" type="primary">rpmF</name>
    <name type="ordered locus">SSP1660</name>
</gene>
<feature type="chain" id="PRO_0000225767" description="Large ribosomal subunit protein bL32">
    <location>
        <begin position="1"/>
        <end position="57"/>
    </location>
</feature>
<sequence length="57" mass="6529">MAVPKRRTSKTRKNKRRTHFKISVPGMTECPNCGEYKLSHRVCKNCGSYKGEDVVSK</sequence>